<feature type="chain" id="PRO_0000209002" description="Probable potassium transport system protein Kup">
    <location>
        <begin position="1"/>
        <end position="651"/>
    </location>
</feature>
<feature type="transmembrane region" description="Helical" evidence="1">
    <location>
        <begin position="41"/>
        <end position="61"/>
    </location>
</feature>
<feature type="transmembrane region" description="Helical" evidence="1">
    <location>
        <begin position="82"/>
        <end position="102"/>
    </location>
</feature>
<feature type="transmembrane region" description="Helical" evidence="1">
    <location>
        <begin position="130"/>
        <end position="150"/>
    </location>
</feature>
<feature type="transmembrane region" description="Helical" evidence="1">
    <location>
        <begin position="163"/>
        <end position="183"/>
    </location>
</feature>
<feature type="transmembrane region" description="Helical" evidence="1">
    <location>
        <begin position="194"/>
        <end position="214"/>
    </location>
</feature>
<feature type="transmembrane region" description="Helical" evidence="1">
    <location>
        <begin position="235"/>
        <end position="255"/>
    </location>
</feature>
<feature type="transmembrane region" description="Helical" evidence="1">
    <location>
        <begin position="276"/>
        <end position="296"/>
    </location>
</feature>
<feature type="transmembrane region" description="Helical" evidence="1">
    <location>
        <begin position="309"/>
        <end position="329"/>
    </location>
</feature>
<feature type="transmembrane region" description="Helical" evidence="1">
    <location>
        <begin position="366"/>
        <end position="386"/>
    </location>
</feature>
<feature type="transmembrane region" description="Helical" evidence="1">
    <location>
        <begin position="395"/>
        <end position="415"/>
    </location>
</feature>
<feature type="transmembrane region" description="Helical" evidence="1">
    <location>
        <begin position="426"/>
        <end position="446"/>
    </location>
</feature>
<feature type="transmembrane region" description="Helical" evidence="1">
    <location>
        <begin position="450"/>
        <end position="470"/>
    </location>
</feature>
<name>KUP_BRUME</name>
<protein>
    <recommendedName>
        <fullName evidence="1">Probable potassium transport system protein Kup</fullName>
    </recommendedName>
</protein>
<accession>Q8YI23</accession>
<dbReference type="EMBL" id="AE008917">
    <property type="protein sequence ID" value="AAL51803.1"/>
    <property type="molecule type" value="Genomic_DNA"/>
</dbReference>
<dbReference type="PIR" id="AH3329">
    <property type="entry name" value="AH3329"/>
</dbReference>
<dbReference type="RefSeq" id="WP_004683997.1">
    <property type="nucleotide sequence ID" value="NZ_GG703780.1"/>
</dbReference>
<dbReference type="KEGG" id="bme:BMEI0622"/>
<dbReference type="KEGG" id="bmel:DK63_803"/>
<dbReference type="PATRIC" id="fig|224914.52.peg.842"/>
<dbReference type="eggNOG" id="COG3158">
    <property type="taxonomic scope" value="Bacteria"/>
</dbReference>
<dbReference type="PhylomeDB" id="Q8YI23"/>
<dbReference type="Proteomes" id="UP000000419">
    <property type="component" value="Chromosome I"/>
</dbReference>
<dbReference type="GO" id="GO:0005886">
    <property type="term" value="C:plasma membrane"/>
    <property type="evidence" value="ECO:0007669"/>
    <property type="project" value="UniProtKB-SubCell"/>
</dbReference>
<dbReference type="GO" id="GO:0015079">
    <property type="term" value="F:potassium ion transmembrane transporter activity"/>
    <property type="evidence" value="ECO:0007669"/>
    <property type="project" value="UniProtKB-UniRule"/>
</dbReference>
<dbReference type="GO" id="GO:0015293">
    <property type="term" value="F:symporter activity"/>
    <property type="evidence" value="ECO:0007669"/>
    <property type="project" value="UniProtKB-UniRule"/>
</dbReference>
<dbReference type="HAMAP" id="MF_01522">
    <property type="entry name" value="Kup"/>
    <property type="match status" value="1"/>
</dbReference>
<dbReference type="InterPro" id="IPR003855">
    <property type="entry name" value="K+_transporter"/>
</dbReference>
<dbReference type="InterPro" id="IPR053952">
    <property type="entry name" value="K_trans_C"/>
</dbReference>
<dbReference type="InterPro" id="IPR053951">
    <property type="entry name" value="K_trans_N"/>
</dbReference>
<dbReference type="InterPro" id="IPR023051">
    <property type="entry name" value="Kup"/>
</dbReference>
<dbReference type="PANTHER" id="PTHR30540:SF79">
    <property type="entry name" value="LOW AFFINITY POTASSIUM TRANSPORT SYSTEM PROTEIN KUP"/>
    <property type="match status" value="1"/>
</dbReference>
<dbReference type="PANTHER" id="PTHR30540">
    <property type="entry name" value="OSMOTIC STRESS POTASSIUM TRANSPORTER"/>
    <property type="match status" value="1"/>
</dbReference>
<dbReference type="Pfam" id="PF02705">
    <property type="entry name" value="K_trans"/>
    <property type="match status" value="1"/>
</dbReference>
<dbReference type="Pfam" id="PF22776">
    <property type="entry name" value="K_trans_C"/>
    <property type="match status" value="1"/>
</dbReference>
<keyword id="KW-0997">Cell inner membrane</keyword>
<keyword id="KW-1003">Cell membrane</keyword>
<keyword id="KW-0406">Ion transport</keyword>
<keyword id="KW-0472">Membrane</keyword>
<keyword id="KW-0630">Potassium</keyword>
<keyword id="KW-0633">Potassium transport</keyword>
<keyword id="KW-0769">Symport</keyword>
<keyword id="KW-0812">Transmembrane</keyword>
<keyword id="KW-1133">Transmembrane helix</keyword>
<keyword id="KW-0813">Transport</keyword>
<proteinExistence type="inferred from homology"/>
<gene>
    <name evidence="1" type="primary">kup</name>
    <name type="ordered locus">BMEI0622</name>
</gene>
<evidence type="ECO:0000255" key="1">
    <source>
        <dbReference type="HAMAP-Rule" id="MF_01522"/>
    </source>
</evidence>
<organism>
    <name type="scientific">Brucella melitensis biotype 1 (strain ATCC 23456 / CCUG 17765 / NCTC 10094 / 16M)</name>
    <dbReference type="NCBI Taxonomy" id="224914"/>
    <lineage>
        <taxon>Bacteria</taxon>
        <taxon>Pseudomonadati</taxon>
        <taxon>Pseudomonadota</taxon>
        <taxon>Alphaproteobacteria</taxon>
        <taxon>Hyphomicrobiales</taxon>
        <taxon>Brucellaceae</taxon>
        <taxon>Brucella/Ochrobactrum group</taxon>
        <taxon>Brucella</taxon>
    </lineage>
</organism>
<comment type="function">
    <text evidence="1">Transport of potassium into the cell. Likely operates as a K(+):H(+) symporter.</text>
</comment>
<comment type="catalytic activity">
    <reaction evidence="1">
        <text>K(+)(in) + H(+)(in) = K(+)(out) + H(+)(out)</text>
        <dbReference type="Rhea" id="RHEA:28490"/>
        <dbReference type="ChEBI" id="CHEBI:15378"/>
        <dbReference type="ChEBI" id="CHEBI:29103"/>
    </reaction>
    <physiologicalReaction direction="right-to-left" evidence="1">
        <dbReference type="Rhea" id="RHEA:28492"/>
    </physiologicalReaction>
</comment>
<comment type="subcellular location">
    <subcellularLocation>
        <location evidence="1">Cell inner membrane</location>
        <topology evidence="1">Multi-pass membrane protein</topology>
    </subcellularLocation>
</comment>
<comment type="similarity">
    <text evidence="1">Belongs to the HAK/KUP transporter (TC 2.A.72) family.</text>
</comment>
<reference key="1">
    <citation type="journal article" date="2002" name="Proc. Natl. Acad. Sci. U.S.A.">
        <title>The genome sequence of the facultative intracellular pathogen Brucella melitensis.</title>
        <authorList>
            <person name="DelVecchio V.G."/>
            <person name="Kapatral V."/>
            <person name="Redkar R.J."/>
            <person name="Patra G."/>
            <person name="Mujer C."/>
            <person name="Los T."/>
            <person name="Ivanova N."/>
            <person name="Anderson I."/>
            <person name="Bhattacharyya A."/>
            <person name="Lykidis A."/>
            <person name="Reznik G."/>
            <person name="Jablonski L."/>
            <person name="Larsen N."/>
            <person name="D'Souza M."/>
            <person name="Bernal A."/>
            <person name="Mazur M."/>
            <person name="Goltsman E."/>
            <person name="Selkov E."/>
            <person name="Elzer P.H."/>
            <person name="Hagius S."/>
            <person name="O'Callaghan D."/>
            <person name="Letesson J.-J."/>
            <person name="Haselkorn R."/>
            <person name="Kyrpides N.C."/>
            <person name="Overbeek R."/>
        </authorList>
    </citation>
    <scope>NUCLEOTIDE SEQUENCE [LARGE SCALE GENOMIC DNA]</scope>
    <source>
        <strain>ATCC 23456 / CCUG 17765 / NCTC 10094 / 16M</strain>
    </source>
</reference>
<sequence>MSGELNGNDTSAQAAVSAGSVLEGAAFADEGEQHNESMKTLVLGALGVVYGDIGTSPIYAFREALHAAATNGILARSDILGVVSLIFWALTLVVTVKYVLFVLRADNNGEGGILSLMALVRGALKGRPDLILGVGICGAALFFGDAVITPAISVLSAMEGLEIVAPNLTPFVVPATVVILVTLFSVQKLGTGRVAIVFGPIMALWFVALGASGLWHIFDDPTVMAALNPYYAVRFLTVSPAVAFVTVGAVFLAMTGAEALYADLGHFGRKPIVRAWLWIVFPCLLLNYFGQAAFILSHGEAAALPFFQMIPSFALWPMVLLATAATVIASQAVITGAYSVARQAVQLNILPRLEIQHTSEKLHGQIYIPRVNLLLGLAVVILVLGFEKSSNLAAAYGIAVTGNMLVTTVLLYIVMTRIWNWRVSRALPIILGFLVIDMLFFSANIIKVHEGGWASIGIATVLVLIMWTWVRGTRHLFQKTRKAEVPLDLIVEQMAKRPPTIVPGTAVFLTGDPKSAPTALMHSLKHYKVLHENNVILTVVTASKPWVASADRARVSQYNERFMLVTLTFGYMQQPNIPRALGLCRRLGWKFDIMTTSFFLSRRSLKASVHSGMPLWQDKLFILLARTASDATEYFQIPTGRVVEIGTQVNI</sequence>